<accession>Q6CYV4</accession>
<reference key="1">
    <citation type="journal article" date="2004" name="Proc. Natl. Acad. Sci. U.S.A.">
        <title>Genome sequence of the enterobacterial phytopathogen Erwinia carotovora subsp. atroseptica and characterization of virulence factors.</title>
        <authorList>
            <person name="Bell K.S."/>
            <person name="Sebaihia M."/>
            <person name="Pritchard L."/>
            <person name="Holden M.T.G."/>
            <person name="Hyman L.J."/>
            <person name="Holeva M.C."/>
            <person name="Thomson N.R."/>
            <person name="Bentley S.D."/>
            <person name="Churcher L.J.C."/>
            <person name="Mungall K."/>
            <person name="Atkin R."/>
            <person name="Bason N."/>
            <person name="Brooks K."/>
            <person name="Chillingworth T."/>
            <person name="Clark K."/>
            <person name="Doggett J."/>
            <person name="Fraser A."/>
            <person name="Hance Z."/>
            <person name="Hauser H."/>
            <person name="Jagels K."/>
            <person name="Moule S."/>
            <person name="Norbertczak H."/>
            <person name="Ormond D."/>
            <person name="Price C."/>
            <person name="Quail M.A."/>
            <person name="Sanders M."/>
            <person name="Walker D."/>
            <person name="Whitehead S."/>
            <person name="Salmond G.P.C."/>
            <person name="Birch P.R.J."/>
            <person name="Parkhill J."/>
            <person name="Toth I.K."/>
        </authorList>
    </citation>
    <scope>NUCLEOTIDE SEQUENCE [LARGE SCALE GENOMIC DNA]</scope>
    <source>
        <strain>SCRI 1043 / ATCC BAA-672</strain>
    </source>
</reference>
<proteinExistence type="inferred from homology"/>
<protein>
    <recommendedName>
        <fullName evidence="1">Putative transport protein ECA4401</fullName>
    </recommendedName>
</protein>
<name>Y4401_PECAS</name>
<evidence type="ECO:0000255" key="1">
    <source>
        <dbReference type="HAMAP-Rule" id="MF_01016"/>
    </source>
</evidence>
<sequence>MSDIALTVSMLALVAVLGLWIGNWRIYGVGLGIGGVLFGGIIVGHVAHQYQIQLNDDMLHVIQEFGLILFVYTIGIQVGPGFFSSLRVSGLRLNAFALLTVFLGSVVTVMLHKLLNIPLPIILGIFSGAVTNTPSLGAGQQILTDLGSSTALVNQMGTGYAMAYPLGICGILLVMWLMRVLFRVAVDNEAKQFETSNGQHHEQLLTINVSVTNTNLQGLAIQDVPILNRDTIVCSRLKRGDELMVPSPHTLIQLGDYLHLVGAKNDLEQARLVIGNEVETSLSTRGTDLHVERVVVTNEKVLGRKIRELNLKQNYDVVISRLNRAGVELVASNQASLQFGDILNLVGRKTAIDAVADIVGNAQQKLQQVQMLPVFIGIGLGVLLGSVPLMVPGFPVALRLGLAGGPLVVALVLGRIGSIGKLHWFMPPSANLALRELGIVLFLSVVGLKSGGDFVDTLLNGDGVWWIGYGALITIVPLLAVGILARTLGKMNYLTLCGMLAGSMTDPPALAFANGLHPTSGAAALSYATVYPLAMFLRIMSPQLLAVLFLTL</sequence>
<feature type="chain" id="PRO_0000208800" description="Putative transport protein ECA4401">
    <location>
        <begin position="1"/>
        <end position="552"/>
    </location>
</feature>
<feature type="transmembrane region" description="Helical" evidence="1">
    <location>
        <begin position="4"/>
        <end position="24"/>
    </location>
</feature>
<feature type="transmembrane region" description="Helical" evidence="1">
    <location>
        <begin position="26"/>
        <end position="46"/>
    </location>
</feature>
<feature type="transmembrane region" description="Helical" evidence="1">
    <location>
        <begin position="65"/>
        <end position="85"/>
    </location>
</feature>
<feature type="transmembrane region" description="Helical" evidence="1">
    <location>
        <begin position="90"/>
        <end position="112"/>
    </location>
</feature>
<feature type="transmembrane region" description="Helical" evidence="1">
    <location>
        <begin position="158"/>
        <end position="178"/>
    </location>
</feature>
<feature type="transmembrane region" description="Helical" evidence="1">
    <location>
        <begin position="371"/>
        <end position="391"/>
    </location>
</feature>
<feature type="transmembrane region" description="Helical" evidence="1">
    <location>
        <begin position="393"/>
        <end position="413"/>
    </location>
</feature>
<feature type="transmembrane region" description="Helical" evidence="1">
    <location>
        <begin position="439"/>
        <end position="459"/>
    </location>
</feature>
<feature type="transmembrane region" description="Helical" evidence="1">
    <location>
        <begin position="464"/>
        <end position="484"/>
    </location>
</feature>
<feature type="transmembrane region" description="Helical" evidence="1">
    <location>
        <begin position="493"/>
        <end position="513"/>
    </location>
</feature>
<feature type="transmembrane region" description="Helical" evidence="1">
    <location>
        <begin position="530"/>
        <end position="550"/>
    </location>
</feature>
<feature type="domain" description="RCK C-terminal 1" evidence="1">
    <location>
        <begin position="191"/>
        <end position="276"/>
    </location>
</feature>
<feature type="domain" description="RCK C-terminal 2" evidence="1">
    <location>
        <begin position="279"/>
        <end position="361"/>
    </location>
</feature>
<gene>
    <name type="ordered locus">ECA4401</name>
</gene>
<keyword id="KW-1003">Cell membrane</keyword>
<keyword id="KW-0472">Membrane</keyword>
<keyword id="KW-1185">Reference proteome</keyword>
<keyword id="KW-0677">Repeat</keyword>
<keyword id="KW-0812">Transmembrane</keyword>
<keyword id="KW-1133">Transmembrane helix</keyword>
<keyword id="KW-0813">Transport</keyword>
<dbReference type="EMBL" id="BX950851">
    <property type="protein sequence ID" value="CAG77297.1"/>
    <property type="molecule type" value="Genomic_DNA"/>
</dbReference>
<dbReference type="RefSeq" id="WP_011095862.1">
    <property type="nucleotide sequence ID" value="NC_004547.2"/>
</dbReference>
<dbReference type="SMR" id="Q6CYV4"/>
<dbReference type="STRING" id="218491.ECA4401"/>
<dbReference type="KEGG" id="eca:ECA4401"/>
<dbReference type="PATRIC" id="fig|218491.5.peg.4487"/>
<dbReference type="eggNOG" id="COG0569">
    <property type="taxonomic scope" value="Bacteria"/>
</dbReference>
<dbReference type="eggNOG" id="COG2985">
    <property type="taxonomic scope" value="Bacteria"/>
</dbReference>
<dbReference type="HOGENOM" id="CLU_035023_3_1_6"/>
<dbReference type="OrthoDB" id="5166626at2"/>
<dbReference type="Proteomes" id="UP000007966">
    <property type="component" value="Chromosome"/>
</dbReference>
<dbReference type="GO" id="GO:0005886">
    <property type="term" value="C:plasma membrane"/>
    <property type="evidence" value="ECO:0007669"/>
    <property type="project" value="UniProtKB-SubCell"/>
</dbReference>
<dbReference type="GO" id="GO:0008324">
    <property type="term" value="F:monoatomic cation transmembrane transporter activity"/>
    <property type="evidence" value="ECO:0007669"/>
    <property type="project" value="InterPro"/>
</dbReference>
<dbReference type="GO" id="GO:0006813">
    <property type="term" value="P:potassium ion transport"/>
    <property type="evidence" value="ECO:0007669"/>
    <property type="project" value="InterPro"/>
</dbReference>
<dbReference type="Gene3D" id="3.30.70.1450">
    <property type="entry name" value="Regulator of K+ conductance, C-terminal domain"/>
    <property type="match status" value="2"/>
</dbReference>
<dbReference type="HAMAP" id="MF_01016">
    <property type="entry name" value="YidE"/>
    <property type="match status" value="1"/>
</dbReference>
<dbReference type="InterPro" id="IPR050144">
    <property type="entry name" value="AAE_transporter"/>
</dbReference>
<dbReference type="InterPro" id="IPR006037">
    <property type="entry name" value="RCK_C"/>
</dbReference>
<dbReference type="InterPro" id="IPR036721">
    <property type="entry name" value="RCK_C_sf"/>
</dbReference>
<dbReference type="InterPro" id="IPR023018">
    <property type="entry name" value="Transpt_YidE_put"/>
</dbReference>
<dbReference type="InterPro" id="IPR006512">
    <property type="entry name" value="YidE_YbjL"/>
</dbReference>
<dbReference type="NCBIfam" id="NF003007">
    <property type="entry name" value="PRK03818.1"/>
    <property type="match status" value="1"/>
</dbReference>
<dbReference type="NCBIfam" id="TIGR01625">
    <property type="entry name" value="YidE_YbjL_dupl"/>
    <property type="match status" value="2"/>
</dbReference>
<dbReference type="PANTHER" id="PTHR30445">
    <property type="entry name" value="K(+)_H(+) ANTIPORTER SUBUNIT KHTT"/>
    <property type="match status" value="1"/>
</dbReference>
<dbReference type="PANTHER" id="PTHR30445:SF3">
    <property type="entry name" value="TRANSPORT PROTEIN YIDE-RELATED"/>
    <property type="match status" value="1"/>
</dbReference>
<dbReference type="Pfam" id="PF06826">
    <property type="entry name" value="Asp-Al_Ex"/>
    <property type="match status" value="2"/>
</dbReference>
<dbReference type="Pfam" id="PF02080">
    <property type="entry name" value="TrkA_C"/>
    <property type="match status" value="2"/>
</dbReference>
<dbReference type="SUPFAM" id="SSF116726">
    <property type="entry name" value="TrkA C-terminal domain-like"/>
    <property type="match status" value="2"/>
</dbReference>
<dbReference type="PROSITE" id="PS51202">
    <property type="entry name" value="RCK_C"/>
    <property type="match status" value="2"/>
</dbReference>
<comment type="subcellular location">
    <subcellularLocation>
        <location evidence="1">Cell membrane</location>
        <topology evidence="1">Multi-pass membrane protein</topology>
    </subcellularLocation>
</comment>
<comment type="similarity">
    <text evidence="1">Belongs to the AAE transporter (TC 2.A.81) family. YidE subfamily.</text>
</comment>
<organism>
    <name type="scientific">Pectobacterium atrosepticum (strain SCRI 1043 / ATCC BAA-672)</name>
    <name type="common">Erwinia carotovora subsp. atroseptica</name>
    <dbReference type="NCBI Taxonomy" id="218491"/>
    <lineage>
        <taxon>Bacteria</taxon>
        <taxon>Pseudomonadati</taxon>
        <taxon>Pseudomonadota</taxon>
        <taxon>Gammaproteobacteria</taxon>
        <taxon>Enterobacterales</taxon>
        <taxon>Pectobacteriaceae</taxon>
        <taxon>Pectobacterium</taxon>
    </lineage>
</organism>